<feature type="chain" id="PRO_0000301914" description="3-hydroxyacyl-[acyl-carrier-protein] dehydratase FabZ">
    <location>
        <begin position="1"/>
        <end position="145"/>
    </location>
</feature>
<feature type="active site" evidence="1">
    <location>
        <position position="48"/>
    </location>
</feature>
<gene>
    <name evidence="1" type="primary">fabZ</name>
    <name type="ordered locus">PST_1548</name>
</gene>
<sequence>MDINEIREYLPHRYPFLLVDRVTELDVEAKRVRAYKNVTINEPFFNGHFPQHPIMPGVLIIEAMAQAAGLLGFKMMGVKPSDGTLYYFVGSDKLRFRQPVRPGDQLVLEADFLSNKRGIWKFDCRATVDGRPVCSAEIICAEQEI</sequence>
<protein>
    <recommendedName>
        <fullName evidence="1">3-hydroxyacyl-[acyl-carrier-protein] dehydratase FabZ</fullName>
        <ecNumber evidence="1">4.2.1.59</ecNumber>
    </recommendedName>
    <alternativeName>
        <fullName evidence="1">(3R)-hydroxymyristoyl-[acyl-carrier-protein] dehydratase</fullName>
        <shortName evidence="1">(3R)-hydroxymyristoyl-ACP dehydrase</shortName>
    </alternativeName>
    <alternativeName>
        <fullName evidence="1">Beta-hydroxyacyl-ACP dehydratase</fullName>
    </alternativeName>
</protein>
<organism>
    <name type="scientific">Stutzerimonas stutzeri (strain A1501)</name>
    <name type="common">Pseudomonas stutzeri</name>
    <dbReference type="NCBI Taxonomy" id="379731"/>
    <lineage>
        <taxon>Bacteria</taxon>
        <taxon>Pseudomonadati</taxon>
        <taxon>Pseudomonadota</taxon>
        <taxon>Gammaproteobacteria</taxon>
        <taxon>Pseudomonadales</taxon>
        <taxon>Pseudomonadaceae</taxon>
        <taxon>Stutzerimonas</taxon>
    </lineage>
</organism>
<proteinExistence type="inferred from homology"/>
<evidence type="ECO:0000255" key="1">
    <source>
        <dbReference type="HAMAP-Rule" id="MF_00406"/>
    </source>
</evidence>
<name>FABZ_STUS1</name>
<accession>A4VJT2</accession>
<dbReference type="EC" id="4.2.1.59" evidence="1"/>
<dbReference type="EMBL" id="CP000304">
    <property type="protein sequence ID" value="ABP79233.1"/>
    <property type="molecule type" value="Genomic_DNA"/>
</dbReference>
<dbReference type="SMR" id="A4VJT2"/>
<dbReference type="KEGG" id="psa:PST_1548"/>
<dbReference type="eggNOG" id="COG0764">
    <property type="taxonomic scope" value="Bacteria"/>
</dbReference>
<dbReference type="HOGENOM" id="CLU_078912_1_2_6"/>
<dbReference type="Proteomes" id="UP000000233">
    <property type="component" value="Chromosome"/>
</dbReference>
<dbReference type="GO" id="GO:0005737">
    <property type="term" value="C:cytoplasm"/>
    <property type="evidence" value="ECO:0007669"/>
    <property type="project" value="UniProtKB-SubCell"/>
</dbReference>
<dbReference type="GO" id="GO:0016020">
    <property type="term" value="C:membrane"/>
    <property type="evidence" value="ECO:0007669"/>
    <property type="project" value="GOC"/>
</dbReference>
<dbReference type="GO" id="GO:0019171">
    <property type="term" value="F:(3R)-hydroxyacyl-[acyl-carrier-protein] dehydratase activity"/>
    <property type="evidence" value="ECO:0007669"/>
    <property type="project" value="UniProtKB-EC"/>
</dbReference>
<dbReference type="GO" id="GO:0006633">
    <property type="term" value="P:fatty acid biosynthetic process"/>
    <property type="evidence" value="ECO:0007669"/>
    <property type="project" value="UniProtKB-UniRule"/>
</dbReference>
<dbReference type="GO" id="GO:0009245">
    <property type="term" value="P:lipid A biosynthetic process"/>
    <property type="evidence" value="ECO:0007669"/>
    <property type="project" value="UniProtKB-UniRule"/>
</dbReference>
<dbReference type="CDD" id="cd01288">
    <property type="entry name" value="FabZ"/>
    <property type="match status" value="1"/>
</dbReference>
<dbReference type="FunFam" id="3.10.129.10:FF:000001">
    <property type="entry name" value="3-hydroxyacyl-[acyl-carrier-protein] dehydratase FabZ"/>
    <property type="match status" value="1"/>
</dbReference>
<dbReference type="Gene3D" id="3.10.129.10">
    <property type="entry name" value="Hotdog Thioesterase"/>
    <property type="match status" value="1"/>
</dbReference>
<dbReference type="HAMAP" id="MF_00406">
    <property type="entry name" value="FabZ"/>
    <property type="match status" value="1"/>
</dbReference>
<dbReference type="InterPro" id="IPR013114">
    <property type="entry name" value="FabA_FabZ"/>
</dbReference>
<dbReference type="InterPro" id="IPR010084">
    <property type="entry name" value="FabZ"/>
</dbReference>
<dbReference type="InterPro" id="IPR029069">
    <property type="entry name" value="HotDog_dom_sf"/>
</dbReference>
<dbReference type="NCBIfam" id="TIGR01750">
    <property type="entry name" value="fabZ"/>
    <property type="match status" value="1"/>
</dbReference>
<dbReference type="NCBIfam" id="NF000582">
    <property type="entry name" value="PRK00006.1"/>
    <property type="match status" value="1"/>
</dbReference>
<dbReference type="PANTHER" id="PTHR30272">
    <property type="entry name" value="3-HYDROXYACYL-[ACYL-CARRIER-PROTEIN] DEHYDRATASE"/>
    <property type="match status" value="1"/>
</dbReference>
<dbReference type="PANTHER" id="PTHR30272:SF1">
    <property type="entry name" value="3-HYDROXYACYL-[ACYL-CARRIER-PROTEIN] DEHYDRATASE"/>
    <property type="match status" value="1"/>
</dbReference>
<dbReference type="Pfam" id="PF07977">
    <property type="entry name" value="FabA"/>
    <property type="match status" value="1"/>
</dbReference>
<dbReference type="SUPFAM" id="SSF54637">
    <property type="entry name" value="Thioesterase/thiol ester dehydrase-isomerase"/>
    <property type="match status" value="1"/>
</dbReference>
<reference key="1">
    <citation type="journal article" date="2008" name="Proc. Natl. Acad. Sci. U.S.A.">
        <title>Nitrogen fixation island and rhizosphere competence traits in the genome of root-associated Pseudomonas stutzeri A1501.</title>
        <authorList>
            <person name="Yan Y."/>
            <person name="Yang J."/>
            <person name="Dou Y."/>
            <person name="Chen M."/>
            <person name="Ping S."/>
            <person name="Peng J."/>
            <person name="Lu W."/>
            <person name="Zhang W."/>
            <person name="Yao Z."/>
            <person name="Li H."/>
            <person name="Liu W."/>
            <person name="He S."/>
            <person name="Geng L."/>
            <person name="Zhang X."/>
            <person name="Yang F."/>
            <person name="Yu H."/>
            <person name="Zhan Y."/>
            <person name="Li D."/>
            <person name="Lin Z."/>
            <person name="Wang Y."/>
            <person name="Elmerich C."/>
            <person name="Lin M."/>
            <person name="Jin Q."/>
        </authorList>
    </citation>
    <scope>NUCLEOTIDE SEQUENCE [LARGE SCALE GENOMIC DNA]</scope>
    <source>
        <strain>A1501</strain>
    </source>
</reference>
<keyword id="KW-0963">Cytoplasm</keyword>
<keyword id="KW-0441">Lipid A biosynthesis</keyword>
<keyword id="KW-0444">Lipid biosynthesis</keyword>
<keyword id="KW-0443">Lipid metabolism</keyword>
<keyword id="KW-0456">Lyase</keyword>
<keyword id="KW-1185">Reference proteome</keyword>
<comment type="function">
    <text evidence="1">Involved in unsaturated fatty acids biosynthesis. Catalyzes the dehydration of short chain beta-hydroxyacyl-ACPs and long chain saturated and unsaturated beta-hydroxyacyl-ACPs.</text>
</comment>
<comment type="catalytic activity">
    <reaction evidence="1">
        <text>a (3R)-hydroxyacyl-[ACP] = a (2E)-enoyl-[ACP] + H2O</text>
        <dbReference type="Rhea" id="RHEA:13097"/>
        <dbReference type="Rhea" id="RHEA-COMP:9925"/>
        <dbReference type="Rhea" id="RHEA-COMP:9945"/>
        <dbReference type="ChEBI" id="CHEBI:15377"/>
        <dbReference type="ChEBI" id="CHEBI:78784"/>
        <dbReference type="ChEBI" id="CHEBI:78827"/>
        <dbReference type="EC" id="4.2.1.59"/>
    </reaction>
</comment>
<comment type="subcellular location">
    <subcellularLocation>
        <location evidence="1">Cytoplasm</location>
    </subcellularLocation>
</comment>
<comment type="similarity">
    <text evidence="1">Belongs to the thioester dehydratase family. FabZ subfamily.</text>
</comment>